<gene>
    <name type="ordered locus">GWCH70_0415</name>
</gene>
<proteinExistence type="inferred from homology"/>
<reference key="1">
    <citation type="submission" date="2009-06" db="EMBL/GenBank/DDBJ databases">
        <title>Complete sequence of chromosome of Geopacillus sp. WCH70.</title>
        <authorList>
            <consortium name="US DOE Joint Genome Institute"/>
            <person name="Lucas S."/>
            <person name="Copeland A."/>
            <person name="Lapidus A."/>
            <person name="Glavina del Rio T."/>
            <person name="Dalin E."/>
            <person name="Tice H."/>
            <person name="Bruce D."/>
            <person name="Goodwin L."/>
            <person name="Pitluck S."/>
            <person name="Chertkov O."/>
            <person name="Brettin T."/>
            <person name="Detter J.C."/>
            <person name="Han C."/>
            <person name="Larimer F."/>
            <person name="Land M."/>
            <person name="Hauser L."/>
            <person name="Kyrpides N."/>
            <person name="Mikhailova N."/>
            <person name="Brumm P."/>
            <person name="Mead D.A."/>
            <person name="Richardson P."/>
        </authorList>
    </citation>
    <scope>NUCLEOTIDE SEQUENCE [LARGE SCALE GENOMIC DNA]</scope>
    <source>
        <strain>WCH70</strain>
    </source>
</reference>
<organism>
    <name type="scientific">Geobacillus sp. (strain WCH70)</name>
    <dbReference type="NCBI Taxonomy" id="471223"/>
    <lineage>
        <taxon>Bacteria</taxon>
        <taxon>Bacillati</taxon>
        <taxon>Bacillota</taxon>
        <taxon>Bacilli</taxon>
        <taxon>Bacillales</taxon>
        <taxon>Anoxybacillaceae</taxon>
        <taxon>Geobacillus</taxon>
    </lineage>
</organism>
<feature type="chain" id="PRO_1000213135" description="UPF0435 protein GWCH70_0415">
    <location>
        <begin position="1"/>
        <end position="74"/>
    </location>
</feature>
<dbReference type="EMBL" id="CP001638">
    <property type="protein sequence ID" value="ACS23335.1"/>
    <property type="molecule type" value="Genomic_DNA"/>
</dbReference>
<dbReference type="SMR" id="C5D5A9"/>
<dbReference type="STRING" id="471223.GWCH70_0415"/>
<dbReference type="KEGG" id="gwc:GWCH70_0415"/>
<dbReference type="eggNOG" id="COG4840">
    <property type="taxonomic scope" value="Bacteria"/>
</dbReference>
<dbReference type="HOGENOM" id="CLU_199533_1_0_9"/>
<dbReference type="OrthoDB" id="2361695at2"/>
<dbReference type="HAMAP" id="MF_00829">
    <property type="entry name" value="UPF0435"/>
    <property type="match status" value="1"/>
</dbReference>
<dbReference type="InterPro" id="IPR009507">
    <property type="entry name" value="UPF0435"/>
</dbReference>
<dbReference type="Pfam" id="PF06569">
    <property type="entry name" value="DUF1128"/>
    <property type="match status" value="1"/>
</dbReference>
<evidence type="ECO:0000255" key="1">
    <source>
        <dbReference type="HAMAP-Rule" id="MF_00829"/>
    </source>
</evidence>
<name>Y415_GEOSW</name>
<accession>C5D5A9</accession>
<sequence length="74" mass="8745">MDLSKKSAENVAYMVEKIKEKLKVLNFDAIKPSHFSEEWYDELKDIYEMVMRKNTFSPSEMQAIAEELGNLRKK</sequence>
<comment type="similarity">
    <text evidence="1">Belongs to the UPF0435 family.</text>
</comment>
<protein>
    <recommendedName>
        <fullName evidence="1">UPF0435 protein GWCH70_0415</fullName>
    </recommendedName>
</protein>